<comment type="catalytic activity">
    <reaction>
        <text>L-seryl-[protein] + ATP = O-phospho-L-seryl-[protein] + ADP + H(+)</text>
        <dbReference type="Rhea" id="RHEA:17989"/>
        <dbReference type="Rhea" id="RHEA-COMP:9863"/>
        <dbReference type="Rhea" id="RHEA-COMP:11604"/>
        <dbReference type="ChEBI" id="CHEBI:15378"/>
        <dbReference type="ChEBI" id="CHEBI:29999"/>
        <dbReference type="ChEBI" id="CHEBI:30616"/>
        <dbReference type="ChEBI" id="CHEBI:83421"/>
        <dbReference type="ChEBI" id="CHEBI:456216"/>
        <dbReference type="EC" id="2.7.11.1"/>
    </reaction>
</comment>
<comment type="catalytic activity">
    <reaction>
        <text>L-threonyl-[protein] + ATP = O-phospho-L-threonyl-[protein] + ADP + H(+)</text>
        <dbReference type="Rhea" id="RHEA:46608"/>
        <dbReference type="Rhea" id="RHEA-COMP:11060"/>
        <dbReference type="Rhea" id="RHEA-COMP:11605"/>
        <dbReference type="ChEBI" id="CHEBI:15378"/>
        <dbReference type="ChEBI" id="CHEBI:30013"/>
        <dbReference type="ChEBI" id="CHEBI:30616"/>
        <dbReference type="ChEBI" id="CHEBI:61977"/>
        <dbReference type="ChEBI" id="CHEBI:456216"/>
        <dbReference type="EC" id="2.7.11.1"/>
    </reaction>
</comment>
<comment type="subcellular location">
    <subcellularLocation>
        <location evidence="1">Cytoplasm</location>
    </subcellularLocation>
</comment>
<comment type="similarity">
    <text evidence="6">Belongs to the protein kinase superfamily. CAMK Ser/Thr protein kinase family. NPR/HAL subfamily. HAL5 sub-subfamily.</text>
</comment>
<comment type="sequence caution" evidence="6">
    <conflict type="erroneous initiation">
        <sequence resource="EMBL-CDS" id="EDN60111"/>
    </conflict>
</comment>
<sequence length="724" mass="82532">MVMQEEKKRQQPVTRRVRSFSESFKNLFRPPRSRDSSPINVTRIPYRSSSTSPKRSSEPPRRSTVSAQILDPKNSPIRQRSYTLKCCTPGLSHPFRQTGSGASNSPTRHRSISGEEQEIVNSLPEYKRSASHTFHGIRRPRSRSSSVSSCDSSNGTTSSSDSQWAMDSLLDDSDNDLTPYRGSNKDILKSKDRAPYNYIDDYNKKALRRATSYPNPLPSKQFYNERLYTRRSHPDEESLESLPRSAGADVQCIIEQNGFKVYEDGSHEHNIKLSGVIAKLEKGNSLPVHRQGLLSRPRLGITLSGLFKHHKNECDIENASSLLPNVEKSQTNHEKRTGQSPNDSNRSSPTQGREDYLKIVNPDASLGSDELKLINSLSSRIHKSLQNYLQEKNLKPAECIGEQAPTFQDNYGHPVGLVGAGAYGEVKLCARLRNEKDSPPFETYHDSKYIYYAVKELKPKPDSDLEKFCTKITSEFIIGHSLSHYHKNGKKPAPNILNVFDILEDSSSFIEVMEFCPAGDLYGMLVGKSKLKGRLHPLEADCFMKQLLHGVKFMHDHGIAHCDLKPENILFYPHGLLKICDFGTSSVFQTAWERRVHAQKGIIGSEPYVAPEEFVDGEYYDPRLIDCWSCGVVYITMILGHHLWKVASREKDMSYDEFYKEMQRKNQFRVFEELKHVNSELATNRKIALYRIFQWEPRKRISVGKLLDMQWMKSTNCCLIYDST</sequence>
<name>KKQ8_YEAS7</name>
<keyword id="KW-0067">ATP-binding</keyword>
<keyword id="KW-0963">Cytoplasm</keyword>
<keyword id="KW-0418">Kinase</keyword>
<keyword id="KW-0547">Nucleotide-binding</keyword>
<keyword id="KW-0597">Phosphoprotein</keyword>
<keyword id="KW-0723">Serine/threonine-protein kinase</keyword>
<keyword id="KW-0808">Transferase</keyword>
<reference key="1">
    <citation type="journal article" date="2007" name="Proc. Natl. Acad. Sci. U.S.A.">
        <title>Genome sequencing and comparative analysis of Saccharomyces cerevisiae strain YJM789.</title>
        <authorList>
            <person name="Wei W."/>
            <person name="McCusker J.H."/>
            <person name="Hyman R.W."/>
            <person name="Jones T."/>
            <person name="Ning Y."/>
            <person name="Cao Z."/>
            <person name="Gu Z."/>
            <person name="Bruno D."/>
            <person name="Miranda M."/>
            <person name="Nguyen M."/>
            <person name="Wilhelmy J."/>
            <person name="Komp C."/>
            <person name="Tamse R."/>
            <person name="Wang X."/>
            <person name="Jia P."/>
            <person name="Luedi P."/>
            <person name="Oefner P.J."/>
            <person name="David L."/>
            <person name="Dietrich F.S."/>
            <person name="Li Y."/>
            <person name="Davis R.W."/>
            <person name="Steinmetz L.M."/>
        </authorList>
    </citation>
    <scope>NUCLEOTIDE SEQUENCE [LARGE SCALE GENOMIC DNA]</scope>
    <source>
        <strain>YJM789</strain>
    </source>
</reference>
<dbReference type="EC" id="2.7.11.1"/>
<dbReference type="EMBL" id="AAFW02000150">
    <property type="protein sequence ID" value="EDN60111.1"/>
    <property type="status" value="ALT_INIT"/>
    <property type="molecule type" value="Genomic_DNA"/>
</dbReference>
<dbReference type="SMR" id="A6ZZF6"/>
<dbReference type="HOGENOM" id="CLU_016904_1_0_1"/>
<dbReference type="OrthoDB" id="26053at4893"/>
<dbReference type="Proteomes" id="UP000007060">
    <property type="component" value="Unassembled WGS sequence"/>
</dbReference>
<dbReference type="GO" id="GO:0005829">
    <property type="term" value="C:cytosol"/>
    <property type="evidence" value="ECO:0007669"/>
    <property type="project" value="TreeGrafter"/>
</dbReference>
<dbReference type="GO" id="GO:0005524">
    <property type="term" value="F:ATP binding"/>
    <property type="evidence" value="ECO:0007669"/>
    <property type="project" value="UniProtKB-KW"/>
</dbReference>
<dbReference type="GO" id="GO:0106310">
    <property type="term" value="F:protein serine kinase activity"/>
    <property type="evidence" value="ECO:0007669"/>
    <property type="project" value="RHEA"/>
</dbReference>
<dbReference type="GO" id="GO:0004674">
    <property type="term" value="F:protein serine/threonine kinase activity"/>
    <property type="evidence" value="ECO:0007669"/>
    <property type="project" value="UniProtKB-KW"/>
</dbReference>
<dbReference type="GO" id="GO:0030003">
    <property type="term" value="P:intracellular monoatomic cation homeostasis"/>
    <property type="evidence" value="ECO:0007669"/>
    <property type="project" value="TreeGrafter"/>
</dbReference>
<dbReference type="FunFam" id="1.10.510.10:FF:001086">
    <property type="entry name" value="Probable serine/threonine-protein kinase KKQ8"/>
    <property type="match status" value="1"/>
</dbReference>
<dbReference type="Gene3D" id="1.10.510.10">
    <property type="entry name" value="Transferase(Phosphotransferase) domain 1"/>
    <property type="match status" value="1"/>
</dbReference>
<dbReference type="InterPro" id="IPR011009">
    <property type="entry name" value="Kinase-like_dom_sf"/>
</dbReference>
<dbReference type="InterPro" id="IPR000719">
    <property type="entry name" value="Prot_kinase_dom"/>
</dbReference>
<dbReference type="InterPro" id="IPR008271">
    <property type="entry name" value="Ser/Thr_kinase_AS"/>
</dbReference>
<dbReference type="PANTHER" id="PTHR24343">
    <property type="entry name" value="SERINE/THREONINE KINASE"/>
    <property type="match status" value="1"/>
</dbReference>
<dbReference type="PANTHER" id="PTHR24343:SF43">
    <property type="entry name" value="SERINE_THREONINE-PROTEIN KINASE HAL5-RELATED"/>
    <property type="match status" value="1"/>
</dbReference>
<dbReference type="Pfam" id="PF00069">
    <property type="entry name" value="Pkinase"/>
    <property type="match status" value="1"/>
</dbReference>
<dbReference type="SMART" id="SM00220">
    <property type="entry name" value="S_TKc"/>
    <property type="match status" value="1"/>
</dbReference>
<dbReference type="SUPFAM" id="SSF56112">
    <property type="entry name" value="Protein kinase-like (PK-like)"/>
    <property type="match status" value="1"/>
</dbReference>
<dbReference type="PROSITE" id="PS50011">
    <property type="entry name" value="PROTEIN_KINASE_DOM"/>
    <property type="match status" value="1"/>
</dbReference>
<dbReference type="PROSITE" id="PS00108">
    <property type="entry name" value="PROTEIN_KINASE_ST"/>
    <property type="match status" value="1"/>
</dbReference>
<accession>A6ZZF6</accession>
<feature type="chain" id="PRO_0000337757" description="Probable serine/threonine-protein kinase KKQ8">
    <location>
        <begin position="1"/>
        <end position="724"/>
    </location>
</feature>
<feature type="domain" description="Protein kinase" evidence="3">
    <location>
        <begin position="412"/>
        <end position="712"/>
    </location>
</feature>
<feature type="region of interest" description="Disordered" evidence="5">
    <location>
        <begin position="1"/>
        <end position="81"/>
    </location>
</feature>
<feature type="region of interest" description="Disordered" evidence="5">
    <location>
        <begin position="93"/>
        <end position="188"/>
    </location>
</feature>
<feature type="region of interest" description="Disordered" evidence="5">
    <location>
        <begin position="318"/>
        <end position="355"/>
    </location>
</feature>
<feature type="compositionally biased region" description="Low complexity" evidence="5">
    <location>
        <begin position="45"/>
        <end position="54"/>
    </location>
</feature>
<feature type="compositionally biased region" description="Polar residues" evidence="5">
    <location>
        <begin position="95"/>
        <end position="106"/>
    </location>
</feature>
<feature type="compositionally biased region" description="Low complexity" evidence="5">
    <location>
        <begin position="143"/>
        <end position="162"/>
    </location>
</feature>
<feature type="compositionally biased region" description="Polar residues" evidence="5">
    <location>
        <begin position="318"/>
        <end position="329"/>
    </location>
</feature>
<feature type="compositionally biased region" description="Polar residues" evidence="5">
    <location>
        <begin position="338"/>
        <end position="351"/>
    </location>
</feature>
<feature type="active site" description="Proton acceptor" evidence="3 4">
    <location>
        <position position="563"/>
    </location>
</feature>
<feature type="binding site" evidence="3">
    <location>
        <begin position="418"/>
        <end position="426"/>
    </location>
    <ligand>
        <name>ATP</name>
        <dbReference type="ChEBI" id="CHEBI:30616"/>
    </ligand>
</feature>
<feature type="binding site" evidence="3">
    <location>
        <position position="455"/>
    </location>
    <ligand>
        <name>ATP</name>
        <dbReference type="ChEBI" id="CHEBI:30616"/>
    </ligand>
</feature>
<feature type="modified residue" description="Phosphoserine" evidence="2">
    <location>
        <position position="19"/>
    </location>
</feature>
<feature type="modified residue" description="Phosphoserine" evidence="2">
    <location>
        <position position="232"/>
    </location>
</feature>
<feature type="modified residue" description="Phosphoserine" evidence="2">
    <location>
        <position position="238"/>
    </location>
</feature>
<feature type="modified residue" description="Phosphoserine" evidence="2">
    <location>
        <position position="241"/>
    </location>
</feature>
<proteinExistence type="inferred from homology"/>
<gene>
    <name type="primary">KKQ8</name>
    <name type="ORF">SCY_3216</name>
</gene>
<protein>
    <recommendedName>
        <fullName>Probable serine/threonine-protein kinase KKQ8</fullName>
        <ecNumber>2.7.11.1</ecNumber>
    </recommendedName>
</protein>
<organism>
    <name type="scientific">Saccharomyces cerevisiae (strain YJM789)</name>
    <name type="common">Baker's yeast</name>
    <dbReference type="NCBI Taxonomy" id="307796"/>
    <lineage>
        <taxon>Eukaryota</taxon>
        <taxon>Fungi</taxon>
        <taxon>Dikarya</taxon>
        <taxon>Ascomycota</taxon>
        <taxon>Saccharomycotina</taxon>
        <taxon>Saccharomycetes</taxon>
        <taxon>Saccharomycetales</taxon>
        <taxon>Saccharomycetaceae</taxon>
        <taxon>Saccharomyces</taxon>
    </lineage>
</organism>
<evidence type="ECO:0000250" key="1"/>
<evidence type="ECO:0000250" key="2">
    <source>
        <dbReference type="UniProtKB" id="P36004"/>
    </source>
</evidence>
<evidence type="ECO:0000255" key="3">
    <source>
        <dbReference type="PROSITE-ProRule" id="PRU00159"/>
    </source>
</evidence>
<evidence type="ECO:0000255" key="4">
    <source>
        <dbReference type="PROSITE-ProRule" id="PRU10027"/>
    </source>
</evidence>
<evidence type="ECO:0000256" key="5">
    <source>
        <dbReference type="SAM" id="MobiDB-lite"/>
    </source>
</evidence>
<evidence type="ECO:0000305" key="6"/>